<accession>P68775</accession>
<accession>P82459</accession>
<proteinExistence type="inferred from homology"/>
<keyword id="KW-0963">Cytoplasm</keyword>
<keyword id="KW-0251">Elongation factor</keyword>
<keyword id="KW-0648">Protein biosynthesis</keyword>
<protein>
    <recommendedName>
        <fullName>Elongation factor P</fullName>
        <shortName>EF-P</shortName>
    </recommendedName>
</protein>
<gene>
    <name type="primary">efp</name>
    <name type="ordered locus">spyM18_1887</name>
</gene>
<comment type="function">
    <text evidence="1">Involved in peptide bond synthesis. Stimulates efficient translation and peptide-bond synthesis on native or reconstituted 70S ribosomes in vitro. Probably functions indirectly by altering the affinity of the ribosome for aminoacyl-tRNA, thus increasing their reactivity as acceptors for peptidyl transferase (By similarity).</text>
</comment>
<comment type="pathway">
    <text>Protein biosynthesis; polypeptide chain elongation.</text>
</comment>
<comment type="subcellular location">
    <subcellularLocation>
        <location evidence="1">Cytoplasm</location>
    </subcellularLocation>
</comment>
<comment type="similarity">
    <text evidence="2">Belongs to the elongation factor P family.</text>
</comment>
<organism>
    <name type="scientific">Streptococcus pyogenes serotype M18 (strain MGAS8232)</name>
    <dbReference type="NCBI Taxonomy" id="186103"/>
    <lineage>
        <taxon>Bacteria</taxon>
        <taxon>Bacillati</taxon>
        <taxon>Bacillota</taxon>
        <taxon>Bacilli</taxon>
        <taxon>Lactobacillales</taxon>
        <taxon>Streptococcaceae</taxon>
        <taxon>Streptococcus</taxon>
    </lineage>
</organism>
<sequence length="185" mass="20467">MIEASKLKAGMTFEAEGKLIRVLEASHHKPGKGNTIMRMKLRDVRTGSTFDTTYRPDEKFEQAIIETVPAQYLYKMDDTAYFMNTDTYDQYEIPVANVEQELLYILENSDVKIQFYGSEVIGVTVPTTVELTVAETQPSIKGATVTGSGKPATLETGLVVNVPDFIEAGQKLIINTAEGTYVSRA</sequence>
<evidence type="ECO:0000250" key="1"/>
<evidence type="ECO:0000305" key="2"/>
<name>EFP_STRP8</name>
<reference key="1">
    <citation type="journal article" date="2002" name="Proc. Natl. Acad. Sci. U.S.A.">
        <title>Genome sequence and comparative microarray analysis of serotype M18 group A Streptococcus strains associated with acute rheumatic fever outbreaks.</title>
        <authorList>
            <person name="Smoot J.C."/>
            <person name="Barbian K.D."/>
            <person name="Van Gompel J.J."/>
            <person name="Smoot L.M."/>
            <person name="Chaussee M.S."/>
            <person name="Sylva G.L."/>
            <person name="Sturdevant D.E."/>
            <person name="Ricklefs S.M."/>
            <person name="Porcella S.F."/>
            <person name="Parkins L.D."/>
            <person name="Beres S.B."/>
            <person name="Campbell D.S."/>
            <person name="Smith T.M."/>
            <person name="Zhang Q."/>
            <person name="Kapur V."/>
            <person name="Daly J.A."/>
            <person name="Veasy L.G."/>
            <person name="Musser J.M."/>
        </authorList>
    </citation>
    <scope>NUCLEOTIDE SEQUENCE [LARGE SCALE GENOMIC DNA]</scope>
    <source>
        <strain>MGAS8232</strain>
    </source>
</reference>
<feature type="chain" id="PRO_0000094346" description="Elongation factor P">
    <location>
        <begin position="1"/>
        <end position="185"/>
    </location>
</feature>
<dbReference type="EMBL" id="AE009949">
    <property type="protein sequence ID" value="AAL98391.1"/>
    <property type="molecule type" value="Genomic_DNA"/>
</dbReference>
<dbReference type="RefSeq" id="WP_002988496.1">
    <property type="nucleotide sequence ID" value="NC_003485.1"/>
</dbReference>
<dbReference type="SMR" id="P68775"/>
<dbReference type="GeneID" id="69900351"/>
<dbReference type="KEGG" id="spm:spyM18_1887"/>
<dbReference type="HOGENOM" id="CLU_074944_3_0_9"/>
<dbReference type="UniPathway" id="UPA00345"/>
<dbReference type="GO" id="GO:0005737">
    <property type="term" value="C:cytoplasm"/>
    <property type="evidence" value="ECO:0007669"/>
    <property type="project" value="UniProtKB-SubCell"/>
</dbReference>
<dbReference type="GO" id="GO:0003746">
    <property type="term" value="F:translation elongation factor activity"/>
    <property type="evidence" value="ECO:0007669"/>
    <property type="project" value="UniProtKB-UniRule"/>
</dbReference>
<dbReference type="GO" id="GO:0043043">
    <property type="term" value="P:peptide biosynthetic process"/>
    <property type="evidence" value="ECO:0007669"/>
    <property type="project" value="InterPro"/>
</dbReference>
<dbReference type="CDD" id="cd04470">
    <property type="entry name" value="S1_EF-P_repeat_1"/>
    <property type="match status" value="1"/>
</dbReference>
<dbReference type="CDD" id="cd05794">
    <property type="entry name" value="S1_EF-P_repeat_2"/>
    <property type="match status" value="1"/>
</dbReference>
<dbReference type="FunFam" id="2.30.30.30:FF:000003">
    <property type="entry name" value="Elongation factor P"/>
    <property type="match status" value="1"/>
</dbReference>
<dbReference type="FunFam" id="2.40.50.140:FF:000004">
    <property type="entry name" value="Elongation factor P"/>
    <property type="match status" value="1"/>
</dbReference>
<dbReference type="FunFam" id="2.40.50.140:FF:000009">
    <property type="entry name" value="Elongation factor P"/>
    <property type="match status" value="1"/>
</dbReference>
<dbReference type="Gene3D" id="2.30.30.30">
    <property type="match status" value="1"/>
</dbReference>
<dbReference type="Gene3D" id="2.40.50.140">
    <property type="entry name" value="Nucleic acid-binding proteins"/>
    <property type="match status" value="2"/>
</dbReference>
<dbReference type="HAMAP" id="MF_00141">
    <property type="entry name" value="EF_P"/>
    <property type="match status" value="1"/>
</dbReference>
<dbReference type="InterPro" id="IPR015365">
    <property type="entry name" value="Elong-fact-P_C"/>
</dbReference>
<dbReference type="InterPro" id="IPR012340">
    <property type="entry name" value="NA-bd_OB-fold"/>
</dbReference>
<dbReference type="InterPro" id="IPR014722">
    <property type="entry name" value="Rib_uL2_dom2"/>
</dbReference>
<dbReference type="InterPro" id="IPR020599">
    <property type="entry name" value="Transl_elong_fac_P/YeiP"/>
</dbReference>
<dbReference type="InterPro" id="IPR013185">
    <property type="entry name" value="Transl_elong_KOW-like"/>
</dbReference>
<dbReference type="InterPro" id="IPR001059">
    <property type="entry name" value="Transl_elong_P/YeiP_cen"/>
</dbReference>
<dbReference type="InterPro" id="IPR013852">
    <property type="entry name" value="Transl_elong_P/YeiP_CS"/>
</dbReference>
<dbReference type="InterPro" id="IPR011768">
    <property type="entry name" value="Transl_elongation_fac_P"/>
</dbReference>
<dbReference type="InterPro" id="IPR008991">
    <property type="entry name" value="Translation_prot_SH3-like_sf"/>
</dbReference>
<dbReference type="NCBIfam" id="TIGR00038">
    <property type="entry name" value="efp"/>
    <property type="match status" value="1"/>
</dbReference>
<dbReference type="NCBIfam" id="NF001810">
    <property type="entry name" value="PRK00529.1"/>
    <property type="match status" value="1"/>
</dbReference>
<dbReference type="PANTHER" id="PTHR30053">
    <property type="entry name" value="ELONGATION FACTOR P"/>
    <property type="match status" value="1"/>
</dbReference>
<dbReference type="PANTHER" id="PTHR30053:SF12">
    <property type="entry name" value="ELONGATION FACTOR P (EF-P) FAMILY PROTEIN"/>
    <property type="match status" value="1"/>
</dbReference>
<dbReference type="Pfam" id="PF01132">
    <property type="entry name" value="EFP"/>
    <property type="match status" value="1"/>
</dbReference>
<dbReference type="Pfam" id="PF08207">
    <property type="entry name" value="EFP_N"/>
    <property type="match status" value="1"/>
</dbReference>
<dbReference type="Pfam" id="PF09285">
    <property type="entry name" value="Elong-fact-P_C"/>
    <property type="match status" value="1"/>
</dbReference>
<dbReference type="PIRSF" id="PIRSF005901">
    <property type="entry name" value="EF-P"/>
    <property type="match status" value="1"/>
</dbReference>
<dbReference type="SMART" id="SM01185">
    <property type="entry name" value="EFP"/>
    <property type="match status" value="1"/>
</dbReference>
<dbReference type="SMART" id="SM00841">
    <property type="entry name" value="Elong-fact-P_C"/>
    <property type="match status" value="1"/>
</dbReference>
<dbReference type="SUPFAM" id="SSF50249">
    <property type="entry name" value="Nucleic acid-binding proteins"/>
    <property type="match status" value="2"/>
</dbReference>
<dbReference type="SUPFAM" id="SSF50104">
    <property type="entry name" value="Translation proteins SH3-like domain"/>
    <property type="match status" value="1"/>
</dbReference>
<dbReference type="PROSITE" id="PS01275">
    <property type="entry name" value="EFP"/>
    <property type="match status" value="1"/>
</dbReference>